<name>EF1G_CARAU</name>
<evidence type="ECO:0000255" key="1">
    <source>
        <dbReference type="PROSITE-ProRule" id="PRU00519"/>
    </source>
</evidence>
<evidence type="ECO:0000256" key="2">
    <source>
        <dbReference type="SAM" id="MobiDB-lite"/>
    </source>
</evidence>
<protein>
    <recommendedName>
        <fullName>Elongation factor 1-gamma</fullName>
        <shortName>EF-1-gamma</shortName>
    </recommendedName>
    <alternativeName>
        <fullName>eEF-1B gamma</fullName>
    </alternativeName>
</protein>
<keyword id="KW-0251">Elongation factor</keyword>
<keyword id="KW-0648">Protein biosynthesis</keyword>
<keyword id="KW-1185">Reference proteome</keyword>
<gene>
    <name type="primary">eef1g</name>
</gene>
<organism>
    <name type="scientific">Carassius auratus</name>
    <name type="common">Goldfish</name>
    <dbReference type="NCBI Taxonomy" id="7957"/>
    <lineage>
        <taxon>Eukaryota</taxon>
        <taxon>Metazoa</taxon>
        <taxon>Chordata</taxon>
        <taxon>Craniata</taxon>
        <taxon>Vertebrata</taxon>
        <taxon>Euteleostomi</taxon>
        <taxon>Actinopterygii</taxon>
        <taxon>Neopterygii</taxon>
        <taxon>Teleostei</taxon>
        <taxon>Ostariophysi</taxon>
        <taxon>Cypriniformes</taxon>
        <taxon>Cyprinidae</taxon>
        <taxon>Cyprininae</taxon>
        <taxon>Carassius</taxon>
    </lineage>
</organism>
<dbReference type="EMBL" id="AB056105">
    <property type="protein sequence ID" value="BAB64568.1"/>
    <property type="molecule type" value="mRNA"/>
</dbReference>
<dbReference type="SMR" id="Q90YC0"/>
<dbReference type="OrthoDB" id="249703at2759"/>
<dbReference type="Proteomes" id="UP000515129">
    <property type="component" value="Unplaced"/>
</dbReference>
<dbReference type="GO" id="GO:0005737">
    <property type="term" value="C:cytoplasm"/>
    <property type="evidence" value="ECO:0007669"/>
    <property type="project" value="TreeGrafter"/>
</dbReference>
<dbReference type="GO" id="GO:0005634">
    <property type="term" value="C:nucleus"/>
    <property type="evidence" value="ECO:0007669"/>
    <property type="project" value="TreeGrafter"/>
</dbReference>
<dbReference type="GO" id="GO:0003746">
    <property type="term" value="F:translation elongation factor activity"/>
    <property type="evidence" value="ECO:0007669"/>
    <property type="project" value="UniProtKB-KW"/>
</dbReference>
<dbReference type="CDD" id="cd03181">
    <property type="entry name" value="GST_C_EF1Bgamma_like"/>
    <property type="match status" value="1"/>
</dbReference>
<dbReference type="CDD" id="cd03044">
    <property type="entry name" value="GST_N_EF1Bgamma"/>
    <property type="match status" value="1"/>
</dbReference>
<dbReference type="FunFam" id="1.20.1050.10:FF:000021">
    <property type="entry name" value="Elongation factor 1-gamma"/>
    <property type="match status" value="1"/>
</dbReference>
<dbReference type="FunFam" id="3.40.30.10:FF:000088">
    <property type="entry name" value="Elongation factor 1-gamma"/>
    <property type="match status" value="1"/>
</dbReference>
<dbReference type="FunFam" id="3.30.70.1010:FF:000001">
    <property type="entry name" value="Elongation factor 1-gamma 1"/>
    <property type="match status" value="1"/>
</dbReference>
<dbReference type="Gene3D" id="1.20.1050.10">
    <property type="match status" value="1"/>
</dbReference>
<dbReference type="Gene3D" id="3.40.30.10">
    <property type="entry name" value="Glutaredoxin"/>
    <property type="match status" value="1"/>
</dbReference>
<dbReference type="Gene3D" id="3.30.70.1010">
    <property type="entry name" value="Translation elongation factor EF1B, gamma chain, conserved domain"/>
    <property type="match status" value="1"/>
</dbReference>
<dbReference type="InterPro" id="IPR050802">
    <property type="entry name" value="EF-GSTs"/>
</dbReference>
<dbReference type="InterPro" id="IPR001662">
    <property type="entry name" value="EF1B_G_C"/>
</dbReference>
<dbReference type="InterPro" id="IPR036433">
    <property type="entry name" value="EF1B_G_C_sf"/>
</dbReference>
<dbReference type="InterPro" id="IPR010987">
    <property type="entry name" value="Glutathione-S-Trfase_C-like"/>
</dbReference>
<dbReference type="InterPro" id="IPR036282">
    <property type="entry name" value="Glutathione-S-Trfase_C_sf"/>
</dbReference>
<dbReference type="InterPro" id="IPR040079">
    <property type="entry name" value="Glutathione_S-Trfase"/>
</dbReference>
<dbReference type="InterPro" id="IPR004045">
    <property type="entry name" value="Glutathione_S-Trfase_N"/>
</dbReference>
<dbReference type="InterPro" id="IPR004046">
    <property type="entry name" value="GST_C"/>
</dbReference>
<dbReference type="InterPro" id="IPR036249">
    <property type="entry name" value="Thioredoxin-like_sf"/>
</dbReference>
<dbReference type="PANTHER" id="PTHR43986">
    <property type="entry name" value="ELONGATION FACTOR 1-GAMMA"/>
    <property type="match status" value="1"/>
</dbReference>
<dbReference type="PANTHER" id="PTHR43986:SF1">
    <property type="entry name" value="ELONGATION FACTOR 1-GAMMA"/>
    <property type="match status" value="1"/>
</dbReference>
<dbReference type="Pfam" id="PF00647">
    <property type="entry name" value="EF1G"/>
    <property type="match status" value="1"/>
</dbReference>
<dbReference type="Pfam" id="PF00043">
    <property type="entry name" value="GST_C"/>
    <property type="match status" value="1"/>
</dbReference>
<dbReference type="Pfam" id="PF02798">
    <property type="entry name" value="GST_N"/>
    <property type="match status" value="1"/>
</dbReference>
<dbReference type="SFLD" id="SFLDS00019">
    <property type="entry name" value="Glutathione_Transferase_(cytos"/>
    <property type="match status" value="1"/>
</dbReference>
<dbReference type="SFLD" id="SFLDG00358">
    <property type="entry name" value="Main_(cytGST)"/>
    <property type="match status" value="1"/>
</dbReference>
<dbReference type="SMART" id="SM01183">
    <property type="entry name" value="EF1G"/>
    <property type="match status" value="1"/>
</dbReference>
<dbReference type="SUPFAM" id="SSF89942">
    <property type="entry name" value="eEF1-gamma domain"/>
    <property type="match status" value="1"/>
</dbReference>
<dbReference type="SUPFAM" id="SSF47616">
    <property type="entry name" value="GST C-terminal domain-like"/>
    <property type="match status" value="1"/>
</dbReference>
<dbReference type="SUPFAM" id="SSF52833">
    <property type="entry name" value="Thioredoxin-like"/>
    <property type="match status" value="1"/>
</dbReference>
<dbReference type="PROSITE" id="PS50040">
    <property type="entry name" value="EF1G_C"/>
    <property type="match status" value="1"/>
</dbReference>
<dbReference type="PROSITE" id="PS50405">
    <property type="entry name" value="GST_CTER"/>
    <property type="match status" value="1"/>
</dbReference>
<dbReference type="PROSITE" id="PS50404">
    <property type="entry name" value="GST_NTER"/>
    <property type="match status" value="1"/>
</dbReference>
<reference key="1">
    <citation type="journal article" date="2002" name="DNA Seq.">
        <title>A major substrate for MPF: cDNA cloning and expression of a polypeptide chain elongation factor 1gamma from goldfish (Carassius auratus).</title>
        <authorList>
            <person name="Tokumoto M."/>
            <person name="Nagahama Y."/>
            <person name="Tokumoto T."/>
        </authorList>
    </citation>
    <scope>NUCLEOTIDE SEQUENCE [MRNA]</scope>
    <source>
        <tissue>Ovary</tissue>
    </source>
</reference>
<sequence>MAAGTLYTYPENWRAFKAQIAAQYSGARLKIASASPAFTFGQTNRSPAFLSNFPLGKVPAYQGDDGFCLFESNAIAHFLSNDALRGSTPQASAQVLQWVSFADSEIIPPASAWVFPTLGIMQFNKQATEQAKEEVKRVLAVLNQHLNTRTFLVGERVSLADITVVCSLLWLYKQVLEPAFRQPYPNVTRWFLTCVNQPQFKAVLGEVKLCEKMAQFDAKKFAEMQPKKEAPAKKEKAGKEGGKQQQPQQEKKEKKKEEKKAAPAEEEMDECEAALASEPKAKDPYAHLPKSSFVMDEFKRKYSNEDTLTVALPYFWDHFDREGFSIWYAEYRFPEELTMSFMSCNLITGMFQRLDKLRKNAFASVILFGANNDSCISGIWVFRGQELAFTLSEDWQIDYESYTWRKLDVDSEECKTMVKEYFAWEGEFKHVGKSFNQGKIFK</sequence>
<feature type="chain" id="PRO_0000208819" description="Elongation factor 1-gamma">
    <location>
        <begin position="1"/>
        <end position="442"/>
    </location>
</feature>
<feature type="domain" description="GST N-terminal">
    <location>
        <begin position="2"/>
        <end position="87"/>
    </location>
</feature>
<feature type="domain" description="GST C-terminal">
    <location>
        <begin position="88"/>
        <end position="216"/>
    </location>
</feature>
<feature type="domain" description="EF-1-gamma C-terminal" evidence="1">
    <location>
        <begin position="281"/>
        <end position="442"/>
    </location>
</feature>
<feature type="region of interest" description="Disordered" evidence="2">
    <location>
        <begin position="224"/>
        <end position="273"/>
    </location>
</feature>
<feature type="compositionally biased region" description="Basic and acidic residues" evidence="2">
    <location>
        <begin position="224"/>
        <end position="242"/>
    </location>
</feature>
<feature type="compositionally biased region" description="Basic and acidic residues" evidence="2">
    <location>
        <begin position="249"/>
        <end position="263"/>
    </location>
</feature>
<proteinExistence type="evidence at transcript level"/>
<accession>Q90YC0</accession>
<comment type="function">
    <text>Probably plays a role in anchoring the complex to other cellular components.</text>
</comment>
<comment type="subunit">
    <text>EF-1 is composed of four subunits: alpha, beta, delta, and gamma.</text>
</comment>